<dbReference type="EMBL" id="CP000057">
    <property type="protein sequence ID" value="AAX87901.1"/>
    <property type="molecule type" value="Genomic_DNA"/>
</dbReference>
<dbReference type="KEGG" id="hit:NTHI1023"/>
<dbReference type="HOGENOM" id="CLU_2105530_0_0_6"/>
<dbReference type="Proteomes" id="UP000002525">
    <property type="component" value="Chromosome"/>
</dbReference>
<dbReference type="GO" id="GO:0080146">
    <property type="term" value="F:L-cysteine desulfhydrase activity"/>
    <property type="evidence" value="ECO:0007669"/>
    <property type="project" value="TreeGrafter"/>
</dbReference>
<dbReference type="GO" id="GO:0019450">
    <property type="term" value="P:L-cysteine catabolic process to pyruvate"/>
    <property type="evidence" value="ECO:0007669"/>
    <property type="project" value="TreeGrafter"/>
</dbReference>
<dbReference type="InterPro" id="IPR021144">
    <property type="entry name" value="UPF0597"/>
</dbReference>
<dbReference type="PANTHER" id="PTHR30501">
    <property type="entry name" value="UPF0597 PROTEIN YHAM"/>
    <property type="match status" value="1"/>
</dbReference>
<dbReference type="PANTHER" id="PTHR30501:SF2">
    <property type="entry name" value="UPF0597 PROTEIN YHAM"/>
    <property type="match status" value="1"/>
</dbReference>
<organism>
    <name type="scientific">Haemophilus influenzae (strain 86-028NP)</name>
    <dbReference type="NCBI Taxonomy" id="281310"/>
    <lineage>
        <taxon>Bacteria</taxon>
        <taxon>Pseudomonadati</taxon>
        <taxon>Pseudomonadota</taxon>
        <taxon>Gammaproteobacteria</taxon>
        <taxon>Pasteurellales</taxon>
        <taxon>Pasteurellaceae</taxon>
        <taxon>Haemophilus</taxon>
    </lineage>
</organism>
<evidence type="ECO:0000305" key="1"/>
<sequence>MNLERLNEIEKPLLHIVKHDVVPALGCTEPISLALASATAAKYLGKTPERIEVKVSPNLMKNGLGVAVPGTGMVGLPIAAAMKVLSNTILIELLIISALLHQKVCSISTDRLSKL</sequence>
<protein>
    <recommendedName>
        <fullName>UPF0597 protein NTHI1023</fullName>
    </recommendedName>
</protein>
<accession>Q4QM46</accession>
<feature type="chain" id="PRO_0000339873" description="UPF0597 protein NTHI1023">
    <location>
        <begin position="1"/>
        <end position="115"/>
    </location>
</feature>
<name>Y1023_HAEI8</name>
<comment type="similarity">
    <text evidence="1">Belongs to the UPF0597 family.</text>
</comment>
<proteinExistence type="inferred from homology"/>
<gene>
    <name type="ordered locus">NTHI1023</name>
</gene>
<reference key="1">
    <citation type="journal article" date="2005" name="J. Bacteriol.">
        <title>Genomic sequence of an otitis media isolate of nontypeable Haemophilus influenzae: comparative study with H. influenzae serotype d, strain KW20.</title>
        <authorList>
            <person name="Harrison A."/>
            <person name="Dyer D.W."/>
            <person name="Gillaspy A."/>
            <person name="Ray W.C."/>
            <person name="Mungur R."/>
            <person name="Carson M.B."/>
            <person name="Zhong H."/>
            <person name="Gipson J."/>
            <person name="Gipson M."/>
            <person name="Johnson L.S."/>
            <person name="Lewis L."/>
            <person name="Bakaletz L.O."/>
            <person name="Munson R.S. Jr."/>
        </authorList>
    </citation>
    <scope>NUCLEOTIDE SEQUENCE [LARGE SCALE GENOMIC DNA]</scope>
    <source>
        <strain>86-028NP</strain>
    </source>
</reference>